<gene>
    <name type="primary">MT-ND4L</name>
    <name type="synonym">MTND4L</name>
    <name type="synonym">NADH4L</name>
    <name type="synonym">ND4L</name>
</gene>
<dbReference type="EC" id="7.1.1.2"/>
<dbReference type="EMBL" id="AM262148">
    <property type="protein sequence ID" value="CAK22238.1"/>
    <property type="molecule type" value="Genomic_DNA"/>
</dbReference>
<dbReference type="RefSeq" id="YP_783965.1">
    <property type="nucleotide sequence ID" value="NC_008447.1"/>
</dbReference>
<dbReference type="SMR" id="Q08GM0"/>
<dbReference type="GeneID" id="4363251"/>
<dbReference type="CTD" id="4539"/>
<dbReference type="GO" id="GO:0005743">
    <property type="term" value="C:mitochondrial inner membrane"/>
    <property type="evidence" value="ECO:0000250"/>
    <property type="project" value="UniProtKB"/>
</dbReference>
<dbReference type="GO" id="GO:0045271">
    <property type="term" value="C:respiratory chain complex I"/>
    <property type="evidence" value="ECO:0000250"/>
    <property type="project" value="UniProtKB"/>
</dbReference>
<dbReference type="GO" id="GO:0008137">
    <property type="term" value="F:NADH dehydrogenase (ubiquinone) activity"/>
    <property type="evidence" value="ECO:0000250"/>
    <property type="project" value="UniProtKB"/>
</dbReference>
<dbReference type="GO" id="GO:0042773">
    <property type="term" value="P:ATP synthesis coupled electron transport"/>
    <property type="evidence" value="ECO:0007669"/>
    <property type="project" value="InterPro"/>
</dbReference>
<dbReference type="FunFam" id="1.10.287.3510:FF:000002">
    <property type="entry name" value="NADH-ubiquinone oxidoreductase chain 4L"/>
    <property type="match status" value="1"/>
</dbReference>
<dbReference type="Gene3D" id="1.10.287.3510">
    <property type="match status" value="1"/>
</dbReference>
<dbReference type="InterPro" id="IPR001133">
    <property type="entry name" value="NADH_UbQ_OxRdtase_chain4L/K"/>
</dbReference>
<dbReference type="InterPro" id="IPR039428">
    <property type="entry name" value="NUOK/Mnh_C1-like"/>
</dbReference>
<dbReference type="PANTHER" id="PTHR11434:SF0">
    <property type="entry name" value="NADH-UBIQUINONE OXIDOREDUCTASE CHAIN 4L"/>
    <property type="match status" value="1"/>
</dbReference>
<dbReference type="PANTHER" id="PTHR11434">
    <property type="entry name" value="NADH-UBIQUINONE OXIDOREDUCTASE SUBUNIT ND4L"/>
    <property type="match status" value="1"/>
</dbReference>
<dbReference type="Pfam" id="PF00420">
    <property type="entry name" value="Oxidored_q2"/>
    <property type="match status" value="1"/>
</dbReference>
<evidence type="ECO:0000250" key="1">
    <source>
        <dbReference type="UniProtKB" id="P03901"/>
    </source>
</evidence>
<evidence type="ECO:0000250" key="2">
    <source>
        <dbReference type="UniProtKB" id="P03902"/>
    </source>
</evidence>
<evidence type="ECO:0000255" key="3"/>
<evidence type="ECO:0000305" key="4"/>
<accession>Q08GM0</accession>
<reference key="1">
    <citation type="journal article" date="2006" name="Zool. Scr.">
        <title>The phylogenetic position of the Banded Hare wallaby (Lagostrophus fasciatus) and a map of the kangaroo mitochondrial control region.</title>
        <authorList>
            <person name="Nilsson M.A."/>
        </authorList>
    </citation>
    <scope>NUCLEOTIDE SEQUENCE [GENOMIC DNA]</scope>
    <source>
        <tissue>Muscle</tissue>
    </source>
</reference>
<keyword id="KW-0249">Electron transport</keyword>
<keyword id="KW-0472">Membrane</keyword>
<keyword id="KW-0496">Mitochondrion</keyword>
<keyword id="KW-0999">Mitochondrion inner membrane</keyword>
<keyword id="KW-0520">NAD</keyword>
<keyword id="KW-0679">Respiratory chain</keyword>
<keyword id="KW-1278">Translocase</keyword>
<keyword id="KW-0812">Transmembrane</keyword>
<keyword id="KW-1133">Transmembrane helix</keyword>
<keyword id="KW-0813">Transport</keyword>
<keyword id="KW-0830">Ubiquinone</keyword>
<comment type="function">
    <text evidence="1">Core subunit of the mitochondrial membrane respiratory chain NADH dehydrogenase (Complex I) which catalyzes electron transfer from NADH through the respiratory chain, using ubiquinone as an electron acceptor. Part of the enzyme membrane arm which is embedded in the lipid bilayer and involved in proton translocation.</text>
</comment>
<comment type="catalytic activity">
    <reaction evidence="1">
        <text>a ubiquinone + NADH + 5 H(+)(in) = a ubiquinol + NAD(+) + 4 H(+)(out)</text>
        <dbReference type="Rhea" id="RHEA:29091"/>
        <dbReference type="Rhea" id="RHEA-COMP:9565"/>
        <dbReference type="Rhea" id="RHEA-COMP:9566"/>
        <dbReference type="ChEBI" id="CHEBI:15378"/>
        <dbReference type="ChEBI" id="CHEBI:16389"/>
        <dbReference type="ChEBI" id="CHEBI:17976"/>
        <dbReference type="ChEBI" id="CHEBI:57540"/>
        <dbReference type="ChEBI" id="CHEBI:57945"/>
        <dbReference type="EC" id="7.1.1.2"/>
    </reaction>
    <physiologicalReaction direction="left-to-right" evidence="1">
        <dbReference type="Rhea" id="RHEA:29092"/>
    </physiologicalReaction>
</comment>
<comment type="subunit">
    <text evidence="2">Core subunit of respiratory chain NADH dehydrogenase (Complex I) which is composed of 45 different subunits.</text>
</comment>
<comment type="subcellular location">
    <subcellularLocation>
        <location evidence="2">Mitochondrion inner membrane</location>
        <topology evidence="3">Multi-pass membrane protein</topology>
    </subcellularLocation>
</comment>
<comment type="similarity">
    <text evidence="4">Belongs to the complex I subunit 4L family.</text>
</comment>
<sequence length="98" mass="10733">MMSINLNLIMAFSLALAGVLIYRSHLMSTLLCLEGMMLSLFILMALIISHFHMFSTSMAPLILLVFSACEAGVGLALLVKTSSNYGNDYVQNLNLLQC</sequence>
<organism>
    <name type="scientific">Lagostrophus fasciatus</name>
    <name type="common">Banded hare-wallaby</name>
    <dbReference type="NCBI Taxonomy" id="65634"/>
    <lineage>
        <taxon>Eukaryota</taxon>
        <taxon>Metazoa</taxon>
        <taxon>Chordata</taxon>
        <taxon>Craniata</taxon>
        <taxon>Vertebrata</taxon>
        <taxon>Euteleostomi</taxon>
        <taxon>Mammalia</taxon>
        <taxon>Metatheria</taxon>
        <taxon>Diprotodontia</taxon>
        <taxon>Macropodidae</taxon>
        <taxon>Lagostrophus</taxon>
    </lineage>
</organism>
<protein>
    <recommendedName>
        <fullName>NADH-ubiquinone oxidoreductase chain 4L</fullName>
        <ecNumber>7.1.1.2</ecNumber>
    </recommendedName>
    <alternativeName>
        <fullName>NADH dehydrogenase subunit 4L</fullName>
    </alternativeName>
</protein>
<feature type="chain" id="PRO_0000275035" description="NADH-ubiquinone oxidoreductase chain 4L">
    <location>
        <begin position="1"/>
        <end position="98"/>
    </location>
</feature>
<feature type="transmembrane region" description="Helical" evidence="3">
    <location>
        <begin position="1"/>
        <end position="21"/>
    </location>
</feature>
<feature type="transmembrane region" description="Helical" evidence="3">
    <location>
        <begin position="28"/>
        <end position="48"/>
    </location>
</feature>
<feature type="transmembrane region" description="Helical" evidence="3">
    <location>
        <begin position="59"/>
        <end position="79"/>
    </location>
</feature>
<geneLocation type="mitochondrion"/>
<name>NU4LM_LAGFA</name>
<proteinExistence type="inferred from homology"/>